<keyword id="KW-0004">4Fe-4S</keyword>
<keyword id="KW-0408">Iron</keyword>
<keyword id="KW-0411">Iron-sulfur</keyword>
<keyword id="KW-0456">Lyase</keyword>
<keyword id="KW-0479">Metal-binding</keyword>
<keyword id="KW-1185">Reference proteome</keyword>
<keyword id="KW-0949">S-adenosyl-L-methionine</keyword>
<keyword id="KW-0784">Thiamine biosynthesis</keyword>
<keyword id="KW-0862">Zinc</keyword>
<gene>
    <name evidence="1" type="primary">thiC</name>
    <name type="ordered locus">Bpro_0037</name>
</gene>
<name>THIC_POLSJ</name>
<feature type="chain" id="PRO_1000093221" description="Phosphomethylpyrimidine synthase">
    <location>
        <begin position="1"/>
        <end position="638"/>
    </location>
</feature>
<feature type="binding site" evidence="1">
    <location>
        <position position="236"/>
    </location>
    <ligand>
        <name>substrate</name>
    </ligand>
</feature>
<feature type="binding site" evidence="1">
    <location>
        <position position="265"/>
    </location>
    <ligand>
        <name>substrate</name>
    </ligand>
</feature>
<feature type="binding site" evidence="1">
    <location>
        <position position="294"/>
    </location>
    <ligand>
        <name>substrate</name>
    </ligand>
</feature>
<feature type="binding site" evidence="1">
    <location>
        <position position="330"/>
    </location>
    <ligand>
        <name>substrate</name>
    </ligand>
</feature>
<feature type="binding site" evidence="1">
    <location>
        <begin position="350"/>
        <end position="352"/>
    </location>
    <ligand>
        <name>substrate</name>
    </ligand>
</feature>
<feature type="binding site" evidence="1">
    <location>
        <begin position="391"/>
        <end position="394"/>
    </location>
    <ligand>
        <name>substrate</name>
    </ligand>
</feature>
<feature type="binding site" evidence="1">
    <location>
        <position position="430"/>
    </location>
    <ligand>
        <name>substrate</name>
    </ligand>
</feature>
<feature type="binding site" evidence="1">
    <location>
        <position position="434"/>
    </location>
    <ligand>
        <name>Zn(2+)</name>
        <dbReference type="ChEBI" id="CHEBI:29105"/>
    </ligand>
</feature>
<feature type="binding site" evidence="1">
    <location>
        <position position="457"/>
    </location>
    <ligand>
        <name>substrate</name>
    </ligand>
</feature>
<feature type="binding site" evidence="1">
    <location>
        <position position="498"/>
    </location>
    <ligand>
        <name>Zn(2+)</name>
        <dbReference type="ChEBI" id="CHEBI:29105"/>
    </ligand>
</feature>
<feature type="binding site" evidence="1">
    <location>
        <position position="578"/>
    </location>
    <ligand>
        <name>[4Fe-4S] cluster</name>
        <dbReference type="ChEBI" id="CHEBI:49883"/>
        <note>4Fe-4S-S-AdoMet</note>
    </ligand>
</feature>
<feature type="binding site" evidence="1">
    <location>
        <position position="581"/>
    </location>
    <ligand>
        <name>[4Fe-4S] cluster</name>
        <dbReference type="ChEBI" id="CHEBI:49883"/>
        <note>4Fe-4S-S-AdoMet</note>
    </ligand>
</feature>
<feature type="binding site" evidence="1">
    <location>
        <position position="586"/>
    </location>
    <ligand>
        <name>[4Fe-4S] cluster</name>
        <dbReference type="ChEBI" id="CHEBI:49883"/>
        <note>4Fe-4S-S-AdoMet</note>
    </ligand>
</feature>
<organism>
    <name type="scientific">Polaromonas sp. (strain JS666 / ATCC BAA-500)</name>
    <dbReference type="NCBI Taxonomy" id="296591"/>
    <lineage>
        <taxon>Bacteria</taxon>
        <taxon>Pseudomonadati</taxon>
        <taxon>Pseudomonadota</taxon>
        <taxon>Betaproteobacteria</taxon>
        <taxon>Burkholderiales</taxon>
        <taxon>Comamonadaceae</taxon>
        <taxon>Polaromonas</taxon>
    </lineage>
</organism>
<comment type="function">
    <text evidence="1">Catalyzes the synthesis of the hydroxymethylpyrimidine phosphate (HMP-P) moiety of thiamine from aminoimidazole ribotide (AIR) in a radical S-adenosyl-L-methionine (SAM)-dependent reaction.</text>
</comment>
<comment type="catalytic activity">
    <reaction evidence="1">
        <text>5-amino-1-(5-phospho-beta-D-ribosyl)imidazole + S-adenosyl-L-methionine = 4-amino-2-methyl-5-(phosphooxymethyl)pyrimidine + CO + 5'-deoxyadenosine + formate + L-methionine + 3 H(+)</text>
        <dbReference type="Rhea" id="RHEA:24840"/>
        <dbReference type="ChEBI" id="CHEBI:15378"/>
        <dbReference type="ChEBI" id="CHEBI:15740"/>
        <dbReference type="ChEBI" id="CHEBI:17245"/>
        <dbReference type="ChEBI" id="CHEBI:17319"/>
        <dbReference type="ChEBI" id="CHEBI:57844"/>
        <dbReference type="ChEBI" id="CHEBI:58354"/>
        <dbReference type="ChEBI" id="CHEBI:59789"/>
        <dbReference type="ChEBI" id="CHEBI:137981"/>
        <dbReference type="EC" id="4.1.99.17"/>
    </reaction>
</comment>
<comment type="cofactor">
    <cofactor evidence="1">
        <name>[4Fe-4S] cluster</name>
        <dbReference type="ChEBI" id="CHEBI:49883"/>
    </cofactor>
    <text evidence="1">Binds 1 [4Fe-4S] cluster per subunit. The cluster is coordinated with 3 cysteines and an exchangeable S-adenosyl-L-methionine.</text>
</comment>
<comment type="pathway">
    <text evidence="1">Cofactor biosynthesis; thiamine diphosphate biosynthesis.</text>
</comment>
<comment type="subunit">
    <text evidence="1">Homodimer.</text>
</comment>
<comment type="similarity">
    <text evidence="1">Belongs to the ThiC family.</text>
</comment>
<protein>
    <recommendedName>
        <fullName evidence="1">Phosphomethylpyrimidine synthase</fullName>
        <ecNumber evidence="1">4.1.99.17</ecNumber>
    </recommendedName>
    <alternativeName>
        <fullName evidence="1">Hydroxymethylpyrimidine phosphate synthase</fullName>
        <shortName evidence="1">HMP-P synthase</shortName>
        <shortName evidence="1">HMP-phosphate synthase</shortName>
        <shortName evidence="1">HMPP synthase</shortName>
    </alternativeName>
    <alternativeName>
        <fullName evidence="1">Thiamine biosynthesis protein ThiC</fullName>
    </alternativeName>
</protein>
<evidence type="ECO:0000255" key="1">
    <source>
        <dbReference type="HAMAP-Rule" id="MF_00089"/>
    </source>
</evidence>
<sequence length="638" mass="70743">MAKTRLTVDTNDLASRITRAPFPGSAKIYIEGSRPDIRVPFREVTLTDTMVHEGAGEPRREANPPLRLYDASGVYTDPASPIDITRGLPPLRGAWINERADTEALPGISSAYGRERLNDPALAALRMAHAPVPRRAKAGANVSQMHYARKGIITPEMEYIAVRENLVRAQLAERLATERMPKKGHSFNASIPEQITAEFVRDEVARGRAVIPNNINHPESEPMIIGRNFLIKVNANIGNSAVTSSIEEEVDKLVWSIRWGADTVMDLSTGENIHETREWILRNSPVPIGTVPIYQALEKVNGKAEDLTWEIFRDTLIEQAEQGVDYFTIHAGVRLAYVPLTANRLTGIVSRGGSIMAKWCLSHHKESFLYERFDEICEIMKAYDVCFSLGDGLRPGSIADANDEAQFAELHTLGELTQIAWKHDVQVMIEGPGHVPLQLVKENVDKQLEACFEAPFYTLGPLITDISPGYDHISSAMGAANIGWYGTAMLCYVTPKEHLGLPNRDDVKQGLIAYKIAAHAGDLAKGYPGAQMWDNAVSKARFEFRWEDQFRLAIDPDTAMAYHDETLPKENAKVAHFCSMCGPKFCSMKISQEVREFARLNPASTTLAAPGVIAIKQIDSGFEEKAKEFREGGSEIYS</sequence>
<proteinExistence type="inferred from homology"/>
<accession>Q12HI8</accession>
<reference key="1">
    <citation type="journal article" date="2008" name="Appl. Environ. Microbiol.">
        <title>The genome of Polaromonas sp. strain JS666: insights into the evolution of a hydrocarbon- and xenobiotic-degrading bacterium, and features of relevance to biotechnology.</title>
        <authorList>
            <person name="Mattes T.E."/>
            <person name="Alexander A.K."/>
            <person name="Richardson P.M."/>
            <person name="Munk A.C."/>
            <person name="Han C.S."/>
            <person name="Stothard P."/>
            <person name="Coleman N.V."/>
        </authorList>
    </citation>
    <scope>NUCLEOTIDE SEQUENCE [LARGE SCALE GENOMIC DNA]</scope>
    <source>
        <strain>JS666 / ATCC BAA-500</strain>
    </source>
</reference>
<dbReference type="EC" id="4.1.99.17" evidence="1"/>
<dbReference type="EMBL" id="CP000316">
    <property type="protein sequence ID" value="ABE42004.1"/>
    <property type="molecule type" value="Genomic_DNA"/>
</dbReference>
<dbReference type="RefSeq" id="WP_011481014.1">
    <property type="nucleotide sequence ID" value="NC_007948.1"/>
</dbReference>
<dbReference type="SMR" id="Q12HI8"/>
<dbReference type="STRING" id="296591.Bpro_0037"/>
<dbReference type="KEGG" id="pol:Bpro_0037"/>
<dbReference type="eggNOG" id="COG0422">
    <property type="taxonomic scope" value="Bacteria"/>
</dbReference>
<dbReference type="HOGENOM" id="CLU_013181_2_1_4"/>
<dbReference type="OrthoDB" id="9805897at2"/>
<dbReference type="UniPathway" id="UPA00060"/>
<dbReference type="Proteomes" id="UP000001983">
    <property type="component" value="Chromosome"/>
</dbReference>
<dbReference type="GO" id="GO:0005829">
    <property type="term" value="C:cytosol"/>
    <property type="evidence" value="ECO:0007669"/>
    <property type="project" value="TreeGrafter"/>
</dbReference>
<dbReference type="GO" id="GO:0051539">
    <property type="term" value="F:4 iron, 4 sulfur cluster binding"/>
    <property type="evidence" value="ECO:0007669"/>
    <property type="project" value="UniProtKB-KW"/>
</dbReference>
<dbReference type="GO" id="GO:0016830">
    <property type="term" value="F:carbon-carbon lyase activity"/>
    <property type="evidence" value="ECO:0007669"/>
    <property type="project" value="InterPro"/>
</dbReference>
<dbReference type="GO" id="GO:0008270">
    <property type="term" value="F:zinc ion binding"/>
    <property type="evidence" value="ECO:0007669"/>
    <property type="project" value="UniProtKB-UniRule"/>
</dbReference>
<dbReference type="GO" id="GO:0009228">
    <property type="term" value="P:thiamine biosynthetic process"/>
    <property type="evidence" value="ECO:0007669"/>
    <property type="project" value="UniProtKB-KW"/>
</dbReference>
<dbReference type="GO" id="GO:0009229">
    <property type="term" value="P:thiamine diphosphate biosynthetic process"/>
    <property type="evidence" value="ECO:0007669"/>
    <property type="project" value="UniProtKB-UniRule"/>
</dbReference>
<dbReference type="FunFam" id="3.20.20.540:FF:000001">
    <property type="entry name" value="Phosphomethylpyrimidine synthase"/>
    <property type="match status" value="1"/>
</dbReference>
<dbReference type="Gene3D" id="6.10.250.620">
    <property type="match status" value="1"/>
</dbReference>
<dbReference type="Gene3D" id="3.20.20.540">
    <property type="entry name" value="Radical SAM ThiC family, central domain"/>
    <property type="match status" value="1"/>
</dbReference>
<dbReference type="HAMAP" id="MF_00089">
    <property type="entry name" value="ThiC"/>
    <property type="match status" value="1"/>
</dbReference>
<dbReference type="InterPro" id="IPR037509">
    <property type="entry name" value="ThiC"/>
</dbReference>
<dbReference type="InterPro" id="IPR025747">
    <property type="entry name" value="ThiC-associated_dom"/>
</dbReference>
<dbReference type="InterPro" id="IPR038521">
    <property type="entry name" value="ThiC/Bza_core_dom"/>
</dbReference>
<dbReference type="InterPro" id="IPR002817">
    <property type="entry name" value="ThiC/BzaA/B"/>
</dbReference>
<dbReference type="NCBIfam" id="NF006763">
    <property type="entry name" value="PRK09284.1"/>
    <property type="match status" value="1"/>
</dbReference>
<dbReference type="NCBIfam" id="NF009895">
    <property type="entry name" value="PRK13352.1"/>
    <property type="match status" value="1"/>
</dbReference>
<dbReference type="NCBIfam" id="TIGR00190">
    <property type="entry name" value="thiC"/>
    <property type="match status" value="1"/>
</dbReference>
<dbReference type="PANTHER" id="PTHR30557:SF1">
    <property type="entry name" value="PHOSPHOMETHYLPYRIMIDINE SYNTHASE, CHLOROPLASTIC"/>
    <property type="match status" value="1"/>
</dbReference>
<dbReference type="PANTHER" id="PTHR30557">
    <property type="entry name" value="THIAMINE BIOSYNTHESIS PROTEIN THIC"/>
    <property type="match status" value="1"/>
</dbReference>
<dbReference type="Pfam" id="PF13667">
    <property type="entry name" value="ThiC-associated"/>
    <property type="match status" value="1"/>
</dbReference>
<dbReference type="Pfam" id="PF01964">
    <property type="entry name" value="ThiC_Rad_SAM"/>
    <property type="match status" value="1"/>
</dbReference>
<dbReference type="SFLD" id="SFLDF00407">
    <property type="entry name" value="phosphomethylpyrimidine_syntha"/>
    <property type="match status" value="1"/>
</dbReference>
<dbReference type="SFLD" id="SFLDG01114">
    <property type="entry name" value="phosphomethylpyrimidine_syntha"/>
    <property type="match status" value="1"/>
</dbReference>
<dbReference type="SFLD" id="SFLDS00113">
    <property type="entry name" value="Radical_SAM_Phosphomethylpyrim"/>
    <property type="match status" value="1"/>
</dbReference>